<dbReference type="EC" id="4.3.2.1" evidence="1"/>
<dbReference type="EMBL" id="BX548174">
    <property type="protein sequence ID" value="CAE18471.1"/>
    <property type="molecule type" value="Genomic_DNA"/>
</dbReference>
<dbReference type="RefSeq" id="WP_011131650.1">
    <property type="nucleotide sequence ID" value="NC_005072.1"/>
</dbReference>
<dbReference type="SMR" id="Q7TUI1"/>
<dbReference type="STRING" id="59919.PMM0012"/>
<dbReference type="KEGG" id="pmm:PMM0012"/>
<dbReference type="eggNOG" id="COG0165">
    <property type="taxonomic scope" value="Bacteria"/>
</dbReference>
<dbReference type="HOGENOM" id="CLU_027272_2_3_3"/>
<dbReference type="OrthoDB" id="9769623at2"/>
<dbReference type="UniPathway" id="UPA00068">
    <property type="reaction ID" value="UER00114"/>
</dbReference>
<dbReference type="Proteomes" id="UP000001026">
    <property type="component" value="Chromosome"/>
</dbReference>
<dbReference type="GO" id="GO:0005829">
    <property type="term" value="C:cytosol"/>
    <property type="evidence" value="ECO:0007669"/>
    <property type="project" value="TreeGrafter"/>
</dbReference>
<dbReference type="GO" id="GO:0004056">
    <property type="term" value="F:argininosuccinate lyase activity"/>
    <property type="evidence" value="ECO:0007669"/>
    <property type="project" value="UniProtKB-UniRule"/>
</dbReference>
<dbReference type="GO" id="GO:0042450">
    <property type="term" value="P:arginine biosynthetic process via ornithine"/>
    <property type="evidence" value="ECO:0007669"/>
    <property type="project" value="InterPro"/>
</dbReference>
<dbReference type="GO" id="GO:0006526">
    <property type="term" value="P:L-arginine biosynthetic process"/>
    <property type="evidence" value="ECO:0007669"/>
    <property type="project" value="UniProtKB-UniRule"/>
</dbReference>
<dbReference type="CDD" id="cd01359">
    <property type="entry name" value="Argininosuccinate_lyase"/>
    <property type="match status" value="1"/>
</dbReference>
<dbReference type="FunFam" id="1.10.275.10:FF:000002">
    <property type="entry name" value="Argininosuccinate lyase"/>
    <property type="match status" value="1"/>
</dbReference>
<dbReference type="FunFam" id="1.10.40.30:FF:000001">
    <property type="entry name" value="Argininosuccinate lyase"/>
    <property type="match status" value="1"/>
</dbReference>
<dbReference type="FunFam" id="1.20.200.10:FF:000015">
    <property type="entry name" value="argininosuccinate lyase isoform X2"/>
    <property type="match status" value="1"/>
</dbReference>
<dbReference type="Gene3D" id="1.10.40.30">
    <property type="entry name" value="Fumarase/aspartase (C-terminal domain)"/>
    <property type="match status" value="1"/>
</dbReference>
<dbReference type="Gene3D" id="1.20.200.10">
    <property type="entry name" value="Fumarase/aspartase (Central domain)"/>
    <property type="match status" value="1"/>
</dbReference>
<dbReference type="Gene3D" id="1.10.275.10">
    <property type="entry name" value="Fumarase/aspartase (N-terminal domain)"/>
    <property type="match status" value="1"/>
</dbReference>
<dbReference type="HAMAP" id="MF_00006">
    <property type="entry name" value="Arg_succ_lyase"/>
    <property type="match status" value="1"/>
</dbReference>
<dbReference type="InterPro" id="IPR029419">
    <property type="entry name" value="Arg_succ_lyase_C"/>
</dbReference>
<dbReference type="InterPro" id="IPR009049">
    <property type="entry name" value="Argininosuccinate_lyase"/>
</dbReference>
<dbReference type="InterPro" id="IPR024083">
    <property type="entry name" value="Fumarase/histidase_N"/>
</dbReference>
<dbReference type="InterPro" id="IPR020557">
    <property type="entry name" value="Fumarate_lyase_CS"/>
</dbReference>
<dbReference type="InterPro" id="IPR000362">
    <property type="entry name" value="Fumarate_lyase_fam"/>
</dbReference>
<dbReference type="InterPro" id="IPR022761">
    <property type="entry name" value="Fumarate_lyase_N"/>
</dbReference>
<dbReference type="InterPro" id="IPR008948">
    <property type="entry name" value="L-Aspartase-like"/>
</dbReference>
<dbReference type="NCBIfam" id="TIGR00838">
    <property type="entry name" value="argH"/>
    <property type="match status" value="1"/>
</dbReference>
<dbReference type="PANTHER" id="PTHR43814">
    <property type="entry name" value="ARGININOSUCCINATE LYASE"/>
    <property type="match status" value="1"/>
</dbReference>
<dbReference type="PANTHER" id="PTHR43814:SF1">
    <property type="entry name" value="ARGININOSUCCINATE LYASE"/>
    <property type="match status" value="1"/>
</dbReference>
<dbReference type="Pfam" id="PF14698">
    <property type="entry name" value="ASL_C2"/>
    <property type="match status" value="1"/>
</dbReference>
<dbReference type="Pfam" id="PF00206">
    <property type="entry name" value="Lyase_1"/>
    <property type="match status" value="1"/>
</dbReference>
<dbReference type="PRINTS" id="PR00145">
    <property type="entry name" value="ARGSUCLYASE"/>
</dbReference>
<dbReference type="PRINTS" id="PR00149">
    <property type="entry name" value="FUMRATELYASE"/>
</dbReference>
<dbReference type="SUPFAM" id="SSF48557">
    <property type="entry name" value="L-aspartase-like"/>
    <property type="match status" value="1"/>
</dbReference>
<dbReference type="PROSITE" id="PS00163">
    <property type="entry name" value="FUMARATE_LYASES"/>
    <property type="match status" value="1"/>
</dbReference>
<evidence type="ECO:0000255" key="1">
    <source>
        <dbReference type="HAMAP-Rule" id="MF_00006"/>
    </source>
</evidence>
<accession>Q7TUI1</accession>
<name>ARLY_PROMP</name>
<keyword id="KW-0028">Amino-acid biosynthesis</keyword>
<keyword id="KW-0055">Arginine biosynthesis</keyword>
<keyword id="KW-0963">Cytoplasm</keyword>
<keyword id="KW-0456">Lyase</keyword>
<protein>
    <recommendedName>
        <fullName evidence="1">Argininosuccinate lyase</fullName>
        <shortName evidence="1">ASAL</shortName>
        <ecNumber evidence="1">4.3.2.1</ecNumber>
    </recommendedName>
    <alternativeName>
        <fullName evidence="1">Arginosuccinase</fullName>
    </alternativeName>
</protein>
<organism>
    <name type="scientific">Prochlorococcus marinus subsp. pastoris (strain CCMP1986 / NIES-2087 / MED4)</name>
    <dbReference type="NCBI Taxonomy" id="59919"/>
    <lineage>
        <taxon>Bacteria</taxon>
        <taxon>Bacillati</taxon>
        <taxon>Cyanobacteriota</taxon>
        <taxon>Cyanophyceae</taxon>
        <taxon>Synechococcales</taxon>
        <taxon>Prochlorococcaceae</taxon>
        <taxon>Prochlorococcus</taxon>
    </lineage>
</organism>
<gene>
    <name evidence="1" type="primary">argH</name>
    <name type="ordered locus">PMM0012</name>
</gene>
<comment type="catalytic activity">
    <reaction evidence="1">
        <text>2-(N(omega)-L-arginino)succinate = fumarate + L-arginine</text>
        <dbReference type="Rhea" id="RHEA:24020"/>
        <dbReference type="ChEBI" id="CHEBI:29806"/>
        <dbReference type="ChEBI" id="CHEBI:32682"/>
        <dbReference type="ChEBI" id="CHEBI:57472"/>
        <dbReference type="EC" id="4.3.2.1"/>
    </reaction>
</comment>
<comment type="pathway">
    <text evidence="1">Amino-acid biosynthesis; L-arginine biosynthesis; L-arginine from L-ornithine and carbamoyl phosphate: step 3/3.</text>
</comment>
<comment type="subcellular location">
    <subcellularLocation>
        <location evidence="1">Cytoplasm</location>
    </subcellularLocation>
</comment>
<comment type="similarity">
    <text evidence="1">Belongs to the lyase 1 family. Argininosuccinate lyase subfamily.</text>
</comment>
<proteinExistence type="inferred from homology"/>
<feature type="chain" id="PRO_0000137805" description="Argininosuccinate lyase">
    <location>
        <begin position="1"/>
        <end position="459"/>
    </location>
</feature>
<sequence>MSKVWSNRFDGSLNPFIEEFNASISFDKTLILEDIECSIAHAKMLSKTKVLSTDESLKIIEGLETIKEKFIEGKFCPGAPSEDIHYCIEEKLINLIGETGKKLHTGRSRNDQVGTDIRLWLRKKIDNIDILLYELQNSLFSIAESNIYTLIPGYTHMQRAQPLSLAHHLLAYLEMFQRDRERLKEVRARVNISPLGAAALAGTKIKIDRYFTAEELGFGNIYKNSIDAVSDRDFCIEFASSSALIMSHLSRISEEIILWVTDEFSFAKLTDKCATGSSLMPQKKNPDVPELIRGKTGRVYGHLQSLLTMIKGVPLSYNKDFQEDKEPIFDTVDTISSCLKAMTILLNEGIEFNVEKLMDSVHNDFSNATDLADYLVFKKVPFREAYQVVGDIVKYCLSKNILFKDLQLEEFQTFHNEFKEDIYENLNPMNVVKSRNSLGGTGFDQVKLELNNWKKKLFT</sequence>
<reference key="1">
    <citation type="journal article" date="2003" name="Nature">
        <title>Genome divergence in two Prochlorococcus ecotypes reflects oceanic niche differentiation.</title>
        <authorList>
            <person name="Rocap G."/>
            <person name="Larimer F.W."/>
            <person name="Lamerdin J.E."/>
            <person name="Malfatti S."/>
            <person name="Chain P."/>
            <person name="Ahlgren N.A."/>
            <person name="Arellano A."/>
            <person name="Coleman M."/>
            <person name="Hauser L."/>
            <person name="Hess W.R."/>
            <person name="Johnson Z.I."/>
            <person name="Land M.L."/>
            <person name="Lindell D."/>
            <person name="Post A.F."/>
            <person name="Regala W."/>
            <person name="Shah M."/>
            <person name="Shaw S.L."/>
            <person name="Steglich C."/>
            <person name="Sullivan M.B."/>
            <person name="Ting C.S."/>
            <person name="Tolonen A."/>
            <person name="Webb E.A."/>
            <person name="Zinser E.R."/>
            <person name="Chisholm S.W."/>
        </authorList>
    </citation>
    <scope>NUCLEOTIDE SEQUENCE [LARGE SCALE GENOMIC DNA]</scope>
    <source>
        <strain>CCMP1986 / NIES-2087 / MED4</strain>
    </source>
</reference>